<protein>
    <recommendedName>
        <fullName>NADH dehydrogenase [ubiquinone] 1 alpha subcomplex subunit 5</fullName>
    </recommendedName>
    <alternativeName>
        <fullName>Complex I subunit B13</fullName>
    </alternativeName>
    <alternativeName>
        <fullName>Complex I-13kD-B</fullName>
        <shortName>CI-13kD-B</shortName>
    </alternativeName>
    <alternativeName>
        <fullName>NADH-ubiquinone oxidoreductase 13 kDa-B subunit</fullName>
    </alternativeName>
</protein>
<proteinExistence type="inferred from homology"/>
<accession>P0CC00</accession>
<accession>Q0MQA0</accession>
<accession>Q5RC95</accession>
<feature type="initiator methionine" description="Removed" evidence="1">
    <location>
        <position position="1"/>
    </location>
</feature>
<feature type="chain" id="PRO_0000389263" description="NADH dehydrogenase [ubiquinone] 1 alpha subcomplex subunit 5">
    <location>
        <begin position="2"/>
        <end position="116"/>
    </location>
</feature>
<feature type="modified residue" description="N-acetylalanine" evidence="1">
    <location>
        <position position="2"/>
    </location>
</feature>
<feature type="modified residue" description="N6-acetyllysine" evidence="2">
    <location>
        <position position="30"/>
    </location>
</feature>
<feature type="modified residue" description="N6-acetyllysine" evidence="3">
    <location>
        <position position="46"/>
    </location>
</feature>
<feature type="modified residue" description="N6-acetyllysine" evidence="2">
    <location>
        <position position="60"/>
    </location>
</feature>
<feature type="modified residue" description="N6-acetyllysine; alternate" evidence="3">
    <location>
        <position position="98"/>
    </location>
</feature>
<feature type="modified residue" description="N6-succinyllysine; alternate" evidence="3">
    <location>
        <position position="98"/>
    </location>
</feature>
<comment type="function">
    <text evidence="2">Accessory subunit of the mitochondrial membrane respiratory chain NADH dehydrogenase (Complex I), that is believed not to be involved in catalysis. Complex I functions in the transfer of electrons from NADH to the respiratory chain. The immediate electron acceptor for the enzyme is believed to be ubiquinone.</text>
</comment>
<comment type="subunit">
    <text evidence="2">Complex I is composed of 45 different subunits.</text>
</comment>
<comment type="subcellular location">
    <subcellularLocation>
        <location evidence="2">Mitochondrion inner membrane</location>
        <topology evidence="2">Peripheral membrane protein</topology>
        <orientation evidence="2">Matrix side</orientation>
    </subcellularLocation>
</comment>
<comment type="similarity">
    <text evidence="4">Belongs to the complex I NDUFA5 subunit family.</text>
</comment>
<sequence length="116" mass="13431">MAGVLKKTTGLVGLAVCNTPHERLRILYTKILDVLEEIPKNAAYRKYTEQITNEKLAMVKAEPDVKKLEDQLQGGQLEEVILQAEHELNLARKMKEWKLWEPLVEEPPADQWKWPI</sequence>
<reference key="1">
    <citation type="journal article" date="2006" name="Gene">
        <title>Adaptive selection of mitochondrial complex I subunits during primate radiation.</title>
        <authorList>
            <person name="Mishmar D."/>
            <person name="Ruiz-Pesini E."/>
            <person name="Mondragon-Palomino M."/>
            <person name="Procaccio V."/>
            <person name="Gaut B."/>
            <person name="Wallace D.C."/>
        </authorList>
    </citation>
    <scope>NUCLEOTIDE SEQUENCE [MRNA]</scope>
</reference>
<gene>
    <name type="primary">NDUFA5</name>
</gene>
<organism>
    <name type="scientific">Pongo pygmaeus</name>
    <name type="common">Bornean orangutan</name>
    <dbReference type="NCBI Taxonomy" id="9600"/>
    <lineage>
        <taxon>Eukaryota</taxon>
        <taxon>Metazoa</taxon>
        <taxon>Chordata</taxon>
        <taxon>Craniata</taxon>
        <taxon>Vertebrata</taxon>
        <taxon>Euteleostomi</taxon>
        <taxon>Mammalia</taxon>
        <taxon>Eutheria</taxon>
        <taxon>Euarchontoglires</taxon>
        <taxon>Primates</taxon>
        <taxon>Haplorrhini</taxon>
        <taxon>Catarrhini</taxon>
        <taxon>Hominidae</taxon>
        <taxon>Pongo</taxon>
    </lineage>
</organism>
<dbReference type="EMBL" id="DQ885734">
    <property type="protein sequence ID" value="ABH12243.1"/>
    <property type="molecule type" value="mRNA"/>
</dbReference>
<dbReference type="SMR" id="P0CC00"/>
<dbReference type="GO" id="GO:0005743">
    <property type="term" value="C:mitochondrial inner membrane"/>
    <property type="evidence" value="ECO:0007669"/>
    <property type="project" value="UniProtKB-SubCell"/>
</dbReference>
<dbReference type="GO" id="GO:0045271">
    <property type="term" value="C:respiratory chain complex I"/>
    <property type="evidence" value="ECO:0000250"/>
    <property type="project" value="UniProtKB"/>
</dbReference>
<dbReference type="GO" id="GO:0022904">
    <property type="term" value="P:respiratory electron transport chain"/>
    <property type="evidence" value="ECO:0007669"/>
    <property type="project" value="InterPro"/>
</dbReference>
<dbReference type="InterPro" id="IPR006806">
    <property type="entry name" value="NDUFA5"/>
</dbReference>
<dbReference type="PANTHER" id="PTHR12653:SF0">
    <property type="entry name" value="NADH DEHYDROGENASE [UBIQUINONE] 1 ALPHA SUBCOMPLEX SUBUNIT 5"/>
    <property type="match status" value="1"/>
</dbReference>
<dbReference type="PANTHER" id="PTHR12653">
    <property type="entry name" value="NADH-UBIQUINONE OXIDOREDUCTASE 13 KD-B SUBUNIT"/>
    <property type="match status" value="1"/>
</dbReference>
<dbReference type="Pfam" id="PF04716">
    <property type="entry name" value="ETC_C1_NDUFA5"/>
    <property type="match status" value="1"/>
</dbReference>
<name>NDUA5_PONPY</name>
<keyword id="KW-0007">Acetylation</keyword>
<keyword id="KW-0249">Electron transport</keyword>
<keyword id="KW-0472">Membrane</keyword>
<keyword id="KW-0496">Mitochondrion</keyword>
<keyword id="KW-0999">Mitochondrion inner membrane</keyword>
<keyword id="KW-0679">Respiratory chain</keyword>
<keyword id="KW-0813">Transport</keyword>
<evidence type="ECO:0000250" key="1">
    <source>
        <dbReference type="UniProtKB" id="P23935"/>
    </source>
</evidence>
<evidence type="ECO:0000250" key="2">
    <source>
        <dbReference type="UniProtKB" id="Q16718"/>
    </source>
</evidence>
<evidence type="ECO:0000250" key="3">
    <source>
        <dbReference type="UniProtKB" id="Q9CPP6"/>
    </source>
</evidence>
<evidence type="ECO:0000305" key="4"/>